<gene>
    <name evidence="1" type="primary">viaA</name>
    <name type="ordered locus">NT01EI_3899</name>
</gene>
<dbReference type="EMBL" id="CP001600">
    <property type="protein sequence ID" value="ACR71010.1"/>
    <property type="molecule type" value="Genomic_DNA"/>
</dbReference>
<dbReference type="RefSeq" id="WP_015873040.1">
    <property type="nucleotide sequence ID" value="NZ_CP169062.1"/>
</dbReference>
<dbReference type="SMR" id="C5BDG8"/>
<dbReference type="STRING" id="67780.B6E78_11020"/>
<dbReference type="GeneID" id="69540715"/>
<dbReference type="KEGG" id="eic:NT01EI_3899"/>
<dbReference type="PATRIC" id="fig|634503.3.peg.3470"/>
<dbReference type="HOGENOM" id="CLU_022130_0_0_6"/>
<dbReference type="OrthoDB" id="387240at2"/>
<dbReference type="Proteomes" id="UP000001485">
    <property type="component" value="Chromosome"/>
</dbReference>
<dbReference type="GO" id="GO:0005829">
    <property type="term" value="C:cytosol"/>
    <property type="evidence" value="ECO:0007669"/>
    <property type="project" value="TreeGrafter"/>
</dbReference>
<dbReference type="CDD" id="cd01462">
    <property type="entry name" value="VWA_YIEM_type"/>
    <property type="match status" value="1"/>
</dbReference>
<dbReference type="Gene3D" id="3.40.50.410">
    <property type="entry name" value="von Willebrand factor, type A domain"/>
    <property type="match status" value="1"/>
</dbReference>
<dbReference type="HAMAP" id="MF_01626">
    <property type="entry name" value="ViaA"/>
    <property type="match status" value="1"/>
</dbReference>
<dbReference type="InterPro" id="IPR008912">
    <property type="entry name" value="Uncharacterised_CoxE"/>
</dbReference>
<dbReference type="InterPro" id="IPR023481">
    <property type="entry name" value="Uncharacterised_ViaA"/>
</dbReference>
<dbReference type="InterPro" id="IPR002035">
    <property type="entry name" value="VWF_A"/>
</dbReference>
<dbReference type="InterPro" id="IPR036465">
    <property type="entry name" value="vWFA_dom_sf"/>
</dbReference>
<dbReference type="NCBIfam" id="NF008230">
    <property type="entry name" value="PRK10997.1"/>
    <property type="match status" value="1"/>
</dbReference>
<dbReference type="PANTHER" id="PTHR36846">
    <property type="entry name" value="PROTEIN VIAA"/>
    <property type="match status" value="1"/>
</dbReference>
<dbReference type="PANTHER" id="PTHR36846:SF1">
    <property type="entry name" value="PROTEIN VIAA"/>
    <property type="match status" value="1"/>
</dbReference>
<dbReference type="Pfam" id="PF05762">
    <property type="entry name" value="VWA_CoxE"/>
    <property type="match status" value="1"/>
</dbReference>
<dbReference type="SMART" id="SM00327">
    <property type="entry name" value="VWA"/>
    <property type="match status" value="1"/>
</dbReference>
<dbReference type="SUPFAM" id="SSF53300">
    <property type="entry name" value="vWA-like"/>
    <property type="match status" value="1"/>
</dbReference>
<keyword id="KW-0143">Chaperone</keyword>
<keyword id="KW-0963">Cytoplasm</keyword>
<proteinExistence type="inferred from homology"/>
<organism>
    <name type="scientific">Edwardsiella ictaluri (strain 93-146)</name>
    <dbReference type="NCBI Taxonomy" id="634503"/>
    <lineage>
        <taxon>Bacteria</taxon>
        <taxon>Pseudomonadati</taxon>
        <taxon>Pseudomonadota</taxon>
        <taxon>Gammaproteobacteria</taxon>
        <taxon>Enterobacterales</taxon>
        <taxon>Hafniaceae</taxon>
        <taxon>Edwardsiella</taxon>
    </lineage>
</organism>
<reference key="1">
    <citation type="submission" date="2009-03" db="EMBL/GenBank/DDBJ databases">
        <title>Complete genome sequence of Edwardsiella ictaluri 93-146.</title>
        <authorList>
            <person name="Williams M.L."/>
            <person name="Gillaspy A.F."/>
            <person name="Dyer D.W."/>
            <person name="Thune R.L."/>
            <person name="Waldbieser G.C."/>
            <person name="Schuster S.C."/>
            <person name="Gipson J."/>
            <person name="Zaitshik J."/>
            <person name="Landry C."/>
            <person name="Lawrence M.L."/>
        </authorList>
    </citation>
    <scope>NUCLEOTIDE SEQUENCE [LARGE SCALE GENOMIC DNA]</scope>
    <source>
        <strain>93-146</strain>
    </source>
</reference>
<name>VIAA_EDWI9</name>
<feature type="chain" id="PRO_1000215746" description="Regulatory protein ViaA">
    <location>
        <begin position="1"/>
        <end position="484"/>
    </location>
</feature>
<sequence length="484" mass="55875">MPSLEAVEAFLVMNESELLQDFLVGLIAAPQLAVFFEKYPRLRKIIDREWPGWQRRLRKRIHDTNVPDDLAQEFTLYQHQLLLGSGEFFRRLPATLAALDSQGSPFSHKAHQLCPDGKITHSDSFHTLFLQQWRLSLVARTLTLHHQVMEQEREMLQQELQQRMQLSGALEPVLVENENAAGRLWDMSRAPTHHGDYQLLVQYGDFLAGQPELLQLAERLGRSRAADPQDHADTQLEIRRVLVREPAVMPEEVSGIHQSDEILRLMPSELSLLGLSELELEFYRRLLEKRLMTYRLQGDAWREQQIQHRVTYRHHQQQPKGPFIVCVDTSGSMGGFHEQCAKAFCLALMRIALADNRRCYIMLFSTAIVQYELTADSGIDQAIRFLSQRFRGGTDLARCLAQTCTLLQQPTWQQADAVVISDFIAQRLPEETQGLINQLQKQDGHCFHAVAMSPHGKPSIMKVFDYIWRFDSGIKGRLLRRWRH</sequence>
<evidence type="ECO:0000255" key="1">
    <source>
        <dbReference type="HAMAP-Rule" id="MF_01626"/>
    </source>
</evidence>
<comment type="function">
    <text evidence="1">Component of the RavA-ViaA chaperone complex, which may act on the membrane to optimize the function of some of the respiratory chains. ViaA stimulates the ATPase activity of RavA.</text>
</comment>
<comment type="subunit">
    <text evidence="1">Homodimer. Interacts with RavA.</text>
</comment>
<comment type="subcellular location">
    <subcellularLocation>
        <location evidence="1">Cytoplasm</location>
    </subcellularLocation>
</comment>
<comment type="similarity">
    <text evidence="1">Belongs to the ViaA family.</text>
</comment>
<protein>
    <recommendedName>
        <fullName evidence="1">Regulatory protein ViaA</fullName>
    </recommendedName>
    <alternativeName>
        <fullName evidence="1">VWA interacting with AAA+ ATPase</fullName>
    </alternativeName>
</protein>
<accession>C5BDG8</accession>